<dbReference type="EMBL" id="AL123456">
    <property type="protein sequence ID" value="CCP46206.1"/>
    <property type="molecule type" value="Genomic_DNA"/>
</dbReference>
<dbReference type="PIR" id="H70973">
    <property type="entry name" value="H70973"/>
</dbReference>
<dbReference type="RefSeq" id="NP_217902.1">
    <property type="nucleotide sequence ID" value="NC_000962.3"/>
</dbReference>
<dbReference type="RefSeq" id="WP_003417918.1">
    <property type="nucleotide sequence ID" value="NC_000962.3"/>
</dbReference>
<dbReference type="PDB" id="6JQY">
    <property type="method" value="X-ray"/>
    <property type="resolution" value="1.64 A"/>
    <property type="chains" value="A/B/C/D=11-54"/>
</dbReference>
<dbReference type="PDBsum" id="6JQY"/>
<dbReference type="SMR" id="P9WF13"/>
<dbReference type="STRING" id="83332.Rv3385c"/>
<dbReference type="PaxDb" id="83332-Rv3385c"/>
<dbReference type="DNASU" id="887429"/>
<dbReference type="GeneID" id="887429"/>
<dbReference type="KEGG" id="mtu:Rv3385c"/>
<dbReference type="KEGG" id="mtv:RVBD_3385c"/>
<dbReference type="PATRIC" id="fig|83332.111.peg.3773"/>
<dbReference type="TubercuList" id="Rv3385c"/>
<dbReference type="eggNOG" id="COG4118">
    <property type="taxonomic scope" value="Bacteria"/>
</dbReference>
<dbReference type="InParanoid" id="P9WF13"/>
<dbReference type="OrthoDB" id="557859at2"/>
<dbReference type="Proteomes" id="UP000001584">
    <property type="component" value="Chromosome"/>
</dbReference>
<dbReference type="GO" id="GO:0097351">
    <property type="term" value="F:toxin sequestering activity"/>
    <property type="evidence" value="ECO:0000318"/>
    <property type="project" value="GO_Central"/>
</dbReference>
<dbReference type="GO" id="GO:0045927">
    <property type="term" value="P:positive regulation of growth"/>
    <property type="evidence" value="ECO:0000315"/>
    <property type="project" value="MTBBASE"/>
</dbReference>
<dbReference type="FunFam" id="3.40.1620.10:FF:000002">
    <property type="entry name" value="Antitoxin"/>
    <property type="match status" value="1"/>
</dbReference>
<dbReference type="Gene3D" id="3.40.1620.10">
    <property type="entry name" value="YefM-like domain"/>
    <property type="match status" value="1"/>
</dbReference>
<dbReference type="InterPro" id="IPR006442">
    <property type="entry name" value="Antitoxin_Phd/YefM"/>
</dbReference>
<dbReference type="InterPro" id="IPR051416">
    <property type="entry name" value="phD-YefM_TA_antitoxins"/>
</dbReference>
<dbReference type="InterPro" id="IPR036165">
    <property type="entry name" value="YefM-like_sf"/>
</dbReference>
<dbReference type="NCBIfam" id="TIGR01552">
    <property type="entry name" value="phd_fam"/>
    <property type="match status" value="1"/>
</dbReference>
<dbReference type="PANTHER" id="PTHR35377:SF5">
    <property type="entry name" value="ANTITOXIN VAPB46"/>
    <property type="match status" value="1"/>
</dbReference>
<dbReference type="PANTHER" id="PTHR35377">
    <property type="entry name" value="ANTITOXIN VAPB49-RELATED-RELATED"/>
    <property type="match status" value="1"/>
</dbReference>
<dbReference type="Pfam" id="PF02604">
    <property type="entry name" value="PhdYeFM_antitox"/>
    <property type="match status" value="1"/>
</dbReference>
<dbReference type="SUPFAM" id="SSF143120">
    <property type="entry name" value="YefM-like"/>
    <property type="match status" value="1"/>
</dbReference>
<evidence type="ECO:0000269" key="1">
    <source>
    </source>
</evidence>
<evidence type="ECO:0000305" key="2"/>
<evidence type="ECO:0007829" key="3">
    <source>
        <dbReference type="PDB" id="6JQY"/>
    </source>
</evidence>
<keyword id="KW-0002">3D-structure</keyword>
<keyword id="KW-1185">Reference proteome</keyword>
<keyword id="KW-1277">Toxin-antitoxin system</keyword>
<comment type="function">
    <text evidence="1">Antitoxin component of a type II toxin-antitoxin (TA) system. Upon expression in M.smegmatis neutralizes the effect of cognate toxin VapC46.</text>
</comment>
<comment type="similarity">
    <text evidence="2">Belongs to the phD/YefM antitoxin family.</text>
</comment>
<reference key="1">
    <citation type="journal article" date="1998" name="Nature">
        <title>Deciphering the biology of Mycobacterium tuberculosis from the complete genome sequence.</title>
        <authorList>
            <person name="Cole S.T."/>
            <person name="Brosch R."/>
            <person name="Parkhill J."/>
            <person name="Garnier T."/>
            <person name="Churcher C.M."/>
            <person name="Harris D.E."/>
            <person name="Gordon S.V."/>
            <person name="Eiglmeier K."/>
            <person name="Gas S."/>
            <person name="Barry C.E. III"/>
            <person name="Tekaia F."/>
            <person name="Badcock K."/>
            <person name="Basham D."/>
            <person name="Brown D."/>
            <person name="Chillingworth T."/>
            <person name="Connor R."/>
            <person name="Davies R.M."/>
            <person name="Devlin K."/>
            <person name="Feltwell T."/>
            <person name="Gentles S."/>
            <person name="Hamlin N."/>
            <person name="Holroyd S."/>
            <person name="Hornsby T."/>
            <person name="Jagels K."/>
            <person name="Krogh A."/>
            <person name="McLean J."/>
            <person name="Moule S."/>
            <person name="Murphy L.D."/>
            <person name="Oliver S."/>
            <person name="Osborne J."/>
            <person name="Quail M.A."/>
            <person name="Rajandream M.A."/>
            <person name="Rogers J."/>
            <person name="Rutter S."/>
            <person name="Seeger K."/>
            <person name="Skelton S."/>
            <person name="Squares S."/>
            <person name="Squares R."/>
            <person name="Sulston J.E."/>
            <person name="Taylor K."/>
            <person name="Whitehead S."/>
            <person name="Barrell B.G."/>
        </authorList>
    </citation>
    <scope>NUCLEOTIDE SEQUENCE [LARGE SCALE GENOMIC DNA]</scope>
    <source>
        <strain>ATCC 25618 / H37Rv</strain>
    </source>
</reference>
<reference key="2">
    <citation type="journal article" date="2009" name="PLoS Genet.">
        <title>Comprehensive functional analysis of Mycobacterium tuberculosis toxin-antitoxin systems: implications for pathogenesis, stress responses, and evolution.</title>
        <authorList>
            <person name="Ramage H.R."/>
            <person name="Connolly L.E."/>
            <person name="Cox J.S."/>
        </authorList>
    </citation>
    <scope>EXPRESSION IN M.SMEGMATIS</scope>
    <scope>FUNCTION AS AN ANTITOXIN</scope>
    <source>
        <strain>ATCC 35801 / TMC 107 / Erdman</strain>
    </source>
</reference>
<reference key="3">
    <citation type="journal article" date="2011" name="Mol. Cell. Proteomics">
        <title>Proteogenomic analysis of Mycobacterium tuberculosis by high resolution mass spectrometry.</title>
        <authorList>
            <person name="Kelkar D.S."/>
            <person name="Kumar D."/>
            <person name="Kumar P."/>
            <person name="Balakrishnan L."/>
            <person name="Muthusamy B."/>
            <person name="Yadav A.K."/>
            <person name="Shrivastava P."/>
            <person name="Marimuthu A."/>
            <person name="Anand S."/>
            <person name="Sundaram H."/>
            <person name="Kingsbury R."/>
            <person name="Harsha H.C."/>
            <person name="Nair B."/>
            <person name="Prasad T.S."/>
            <person name="Chauhan D.S."/>
            <person name="Katoch K."/>
            <person name="Katoch V.M."/>
            <person name="Kumar P."/>
            <person name="Chaerkady R."/>
            <person name="Ramachandran S."/>
            <person name="Dash D."/>
            <person name="Pandey A."/>
        </authorList>
    </citation>
    <scope>IDENTIFICATION BY MASS SPECTROMETRY [LARGE SCALE ANALYSIS]</scope>
    <source>
        <strain>ATCC 25618 / H37Rv</strain>
    </source>
</reference>
<name>VPB46_MYCTU</name>
<gene>
    <name type="primary">vapB46</name>
    <name type="ordered locus">Rv3385c</name>
</gene>
<feature type="chain" id="PRO_0000408050" description="Antitoxin VapB46">
    <location>
        <begin position="1"/>
        <end position="102"/>
    </location>
</feature>
<feature type="strand" evidence="3">
    <location>
        <begin position="13"/>
        <end position="16"/>
    </location>
</feature>
<feature type="helix" evidence="3">
    <location>
        <begin position="17"/>
        <end position="22"/>
    </location>
</feature>
<feature type="helix" evidence="3">
    <location>
        <begin position="24"/>
        <end position="32"/>
    </location>
</feature>
<feature type="strand" evidence="3">
    <location>
        <begin position="37"/>
        <end position="41"/>
    </location>
</feature>
<feature type="strand" evidence="3">
    <location>
        <begin position="44"/>
        <end position="51"/>
    </location>
</feature>
<sequence length="102" mass="11031">MTPTACATVSTMTSVGVRALRQRASELLRRVEAGETIEITDRGRPVALLSPLPQGGPYEQLLASGEIERATLDVVDLPEPLDLDAGVELPSVTLARLREHER</sequence>
<accession>P9WF13</accession>
<accession>L0TF80</accession>
<accession>O50412</accession>
<accession>Q7D5L3</accession>
<organism>
    <name type="scientific">Mycobacterium tuberculosis (strain ATCC 25618 / H37Rv)</name>
    <dbReference type="NCBI Taxonomy" id="83332"/>
    <lineage>
        <taxon>Bacteria</taxon>
        <taxon>Bacillati</taxon>
        <taxon>Actinomycetota</taxon>
        <taxon>Actinomycetes</taxon>
        <taxon>Mycobacteriales</taxon>
        <taxon>Mycobacteriaceae</taxon>
        <taxon>Mycobacterium</taxon>
        <taxon>Mycobacterium tuberculosis complex</taxon>
    </lineage>
</organism>
<proteinExistence type="evidence at protein level"/>
<protein>
    <recommendedName>
        <fullName>Antitoxin VapB46</fullName>
    </recommendedName>
</protein>